<dbReference type="EMBL" id="CP001598">
    <property type="protein sequence ID" value="ACQ47426.1"/>
    <property type="molecule type" value="Genomic_DNA"/>
</dbReference>
<dbReference type="RefSeq" id="WP_001220365.1">
    <property type="nucleotide sequence ID" value="NC_012659.1"/>
</dbReference>
<dbReference type="GeneID" id="45021392"/>
<dbReference type="KEGG" id="bai:BAA_1480"/>
<dbReference type="HOGENOM" id="CLU_187365_0_0_9"/>
<dbReference type="HAMAP" id="MF_00506">
    <property type="entry name" value="UPF0180"/>
    <property type="match status" value="1"/>
</dbReference>
<dbReference type="InterPro" id="IPR005370">
    <property type="entry name" value="UPF0180"/>
</dbReference>
<dbReference type="NCBIfam" id="NF002845">
    <property type="entry name" value="PRK03094.1"/>
    <property type="match status" value="1"/>
</dbReference>
<dbReference type="Pfam" id="PF03698">
    <property type="entry name" value="UPF0180"/>
    <property type="match status" value="1"/>
</dbReference>
<accession>C3P4Y9</accession>
<feature type="chain" id="PRO_1000197840" description="UPF0180 protein BAA_1480">
    <location>
        <begin position="1"/>
        <end position="82"/>
    </location>
</feature>
<reference key="1">
    <citation type="submission" date="2009-04" db="EMBL/GenBank/DDBJ databases">
        <title>Genome sequence of Bacillus anthracis A0248.</title>
        <authorList>
            <person name="Dodson R.J."/>
            <person name="Munk A.C."/>
            <person name="Bruce D."/>
            <person name="Detter C."/>
            <person name="Tapia R."/>
            <person name="Sutton G."/>
            <person name="Sims D."/>
            <person name="Brettin T."/>
        </authorList>
    </citation>
    <scope>NUCLEOTIDE SEQUENCE [LARGE SCALE GENOMIC DNA]</scope>
    <source>
        <strain>A0248</strain>
    </source>
</reference>
<proteinExistence type="inferred from homology"/>
<evidence type="ECO:0000255" key="1">
    <source>
        <dbReference type="HAMAP-Rule" id="MF_00506"/>
    </source>
</evidence>
<sequence length="82" mass="8750">MRIKARIGVENSLTDVQQALKQQGHEVVTLNSEQDAQGCDCCVVTGQDSNMMGIADASIKGSVITAHGLTTDDICQQVESRT</sequence>
<name>Y1480_BACAA</name>
<comment type="similarity">
    <text evidence="1">Belongs to the UPF0180 family.</text>
</comment>
<gene>
    <name type="ordered locus">BAA_1480</name>
</gene>
<organism>
    <name type="scientific">Bacillus anthracis (strain A0248)</name>
    <dbReference type="NCBI Taxonomy" id="592021"/>
    <lineage>
        <taxon>Bacteria</taxon>
        <taxon>Bacillati</taxon>
        <taxon>Bacillota</taxon>
        <taxon>Bacilli</taxon>
        <taxon>Bacillales</taxon>
        <taxon>Bacillaceae</taxon>
        <taxon>Bacillus</taxon>
        <taxon>Bacillus cereus group</taxon>
    </lineage>
</organism>
<protein>
    <recommendedName>
        <fullName evidence="1">UPF0180 protein BAA_1480</fullName>
    </recommendedName>
</protein>